<evidence type="ECO:0000250" key="1"/>
<evidence type="ECO:0000305" key="2"/>
<accession>P47353</accession>
<comment type="function">
    <text evidence="1">Essential for recycling GMP and indirectly, cGMP.</text>
</comment>
<comment type="catalytic activity">
    <reaction>
        <text>GMP + ATP = GDP + ADP</text>
        <dbReference type="Rhea" id="RHEA:20780"/>
        <dbReference type="ChEBI" id="CHEBI:30616"/>
        <dbReference type="ChEBI" id="CHEBI:58115"/>
        <dbReference type="ChEBI" id="CHEBI:58189"/>
        <dbReference type="ChEBI" id="CHEBI:456216"/>
        <dbReference type="EC" id="2.7.4.8"/>
    </reaction>
</comment>
<comment type="subcellular location">
    <subcellularLocation>
        <location evidence="1">Cytoplasm</location>
    </subcellularLocation>
</comment>
<comment type="similarity">
    <text evidence="2">Belongs to the guanylate kinase family.</text>
</comment>
<comment type="sequence caution" evidence="2">
    <conflict type="erroneous initiation">
        <sequence resource="EMBL-CDS" id="AAC71325"/>
    </conflict>
</comment>
<feature type="chain" id="PRO_0000170562" description="Guanylate kinase">
    <location>
        <begin position="1"/>
        <end position="240"/>
    </location>
</feature>
<feature type="domain" description="Guanylate kinase-like">
    <location>
        <begin position="56"/>
        <end position="236"/>
    </location>
</feature>
<feature type="binding site" evidence="1">
    <location>
        <begin position="63"/>
        <end position="70"/>
    </location>
    <ligand>
        <name>ATP</name>
        <dbReference type="ChEBI" id="CHEBI:30616"/>
    </ligand>
</feature>
<gene>
    <name type="primary">gmk</name>
    <name type="ordered locus">MG107</name>
</gene>
<reference key="1">
    <citation type="journal article" date="1995" name="Science">
        <title>The minimal gene complement of Mycoplasma genitalium.</title>
        <authorList>
            <person name="Fraser C.M."/>
            <person name="Gocayne J.D."/>
            <person name="White O."/>
            <person name="Adams M.D."/>
            <person name="Clayton R.A."/>
            <person name="Fleischmann R.D."/>
            <person name="Bult C.J."/>
            <person name="Kerlavage A.R."/>
            <person name="Sutton G.G."/>
            <person name="Kelley J.M."/>
            <person name="Fritchman J.L."/>
            <person name="Weidman J.F."/>
            <person name="Small K.V."/>
            <person name="Sandusky M."/>
            <person name="Fuhrmann J.L."/>
            <person name="Nguyen D.T."/>
            <person name="Utterback T.R."/>
            <person name="Saudek D.M."/>
            <person name="Phillips C.A."/>
            <person name="Merrick J.M."/>
            <person name="Tomb J.-F."/>
            <person name="Dougherty B.A."/>
            <person name="Bott K.F."/>
            <person name="Hu P.-C."/>
            <person name="Lucier T.S."/>
            <person name="Peterson S.N."/>
            <person name="Smith H.O."/>
            <person name="Hutchison C.A. III"/>
            <person name="Venter J.C."/>
        </authorList>
    </citation>
    <scope>NUCLEOTIDE SEQUENCE [LARGE SCALE GENOMIC DNA]</scope>
    <source>
        <strain>ATCC 33530 / DSM 19775 / NCTC 10195 / G37</strain>
    </source>
</reference>
<sequence length="240" mass="27520">MIQVSICSSIGKLTASVGLLIKALSSKTSQVLVGWKVIDKNSKVKIILTIEVNNQGRIFVITGPSGVGKSTLVKALLDHFKEQLFYSISATTRKKRISEKEGIDYFFKDKDEFENLIKQDAFIEWACYNNHYYGTLKSQAEQAIKSGINLMLEIEYQGALQVKSKYPHNVVLIFIKPPSMQELLKRLKKRNDEDETTIKKRLEQAKIEFQQIDNFKYVVTNKEFDKTLNELKSILLSEFI</sequence>
<protein>
    <recommendedName>
        <fullName>Guanylate kinase</fullName>
        <ecNumber>2.7.4.8</ecNumber>
    </recommendedName>
    <alternativeName>
        <fullName>GMP kinase</fullName>
    </alternativeName>
</protein>
<proteinExistence type="inferred from homology"/>
<dbReference type="EC" id="2.7.4.8"/>
<dbReference type="EMBL" id="L43967">
    <property type="protein sequence ID" value="AAC71325.1"/>
    <property type="status" value="ALT_INIT"/>
    <property type="molecule type" value="Genomic_DNA"/>
</dbReference>
<dbReference type="SMR" id="P47353"/>
<dbReference type="FunCoup" id="P47353">
    <property type="interactions" value="175"/>
</dbReference>
<dbReference type="STRING" id="243273.MG_107"/>
<dbReference type="KEGG" id="mge:MG_107"/>
<dbReference type="eggNOG" id="COG0194">
    <property type="taxonomic scope" value="Bacteria"/>
</dbReference>
<dbReference type="HOGENOM" id="CLU_001715_1_2_14"/>
<dbReference type="InParanoid" id="P47353"/>
<dbReference type="Proteomes" id="UP000000807">
    <property type="component" value="Chromosome"/>
</dbReference>
<dbReference type="GO" id="GO:0005829">
    <property type="term" value="C:cytosol"/>
    <property type="evidence" value="ECO:0000318"/>
    <property type="project" value="GO_Central"/>
</dbReference>
<dbReference type="GO" id="GO:0005524">
    <property type="term" value="F:ATP binding"/>
    <property type="evidence" value="ECO:0007669"/>
    <property type="project" value="UniProtKB-UniRule"/>
</dbReference>
<dbReference type="GO" id="GO:0004385">
    <property type="term" value="F:guanylate kinase activity"/>
    <property type="evidence" value="ECO:0000318"/>
    <property type="project" value="GO_Central"/>
</dbReference>
<dbReference type="CDD" id="cd00071">
    <property type="entry name" value="GMPK"/>
    <property type="match status" value="1"/>
</dbReference>
<dbReference type="FunFam" id="3.30.63.10:FF:000005">
    <property type="entry name" value="Guanylate kinase"/>
    <property type="match status" value="1"/>
</dbReference>
<dbReference type="Gene3D" id="3.30.63.10">
    <property type="entry name" value="Guanylate Kinase phosphate binding domain"/>
    <property type="match status" value="1"/>
</dbReference>
<dbReference type="Gene3D" id="3.40.50.300">
    <property type="entry name" value="P-loop containing nucleotide triphosphate hydrolases"/>
    <property type="match status" value="1"/>
</dbReference>
<dbReference type="HAMAP" id="MF_00328">
    <property type="entry name" value="Guanylate_kinase"/>
    <property type="match status" value="1"/>
</dbReference>
<dbReference type="InterPro" id="IPR001270">
    <property type="entry name" value="ClpA/B"/>
</dbReference>
<dbReference type="InterPro" id="IPR008145">
    <property type="entry name" value="GK/Ca_channel_bsu"/>
</dbReference>
<dbReference type="InterPro" id="IPR008144">
    <property type="entry name" value="Guanylate_kin-like_dom"/>
</dbReference>
<dbReference type="InterPro" id="IPR017665">
    <property type="entry name" value="Guanylate_kinase"/>
</dbReference>
<dbReference type="InterPro" id="IPR020590">
    <property type="entry name" value="Guanylate_kinase_CS"/>
</dbReference>
<dbReference type="InterPro" id="IPR027417">
    <property type="entry name" value="P-loop_NTPase"/>
</dbReference>
<dbReference type="NCBIfam" id="TIGR03263">
    <property type="entry name" value="guanyl_kin"/>
    <property type="match status" value="1"/>
</dbReference>
<dbReference type="PANTHER" id="PTHR23117:SF13">
    <property type="entry name" value="GUANYLATE KINASE"/>
    <property type="match status" value="1"/>
</dbReference>
<dbReference type="PANTHER" id="PTHR23117">
    <property type="entry name" value="GUANYLATE KINASE-RELATED"/>
    <property type="match status" value="1"/>
</dbReference>
<dbReference type="Pfam" id="PF00625">
    <property type="entry name" value="Guanylate_kin"/>
    <property type="match status" value="1"/>
</dbReference>
<dbReference type="PRINTS" id="PR00300">
    <property type="entry name" value="CLPPROTEASEA"/>
</dbReference>
<dbReference type="SMART" id="SM00072">
    <property type="entry name" value="GuKc"/>
    <property type="match status" value="1"/>
</dbReference>
<dbReference type="SUPFAM" id="SSF52540">
    <property type="entry name" value="P-loop containing nucleoside triphosphate hydrolases"/>
    <property type="match status" value="1"/>
</dbReference>
<dbReference type="PROSITE" id="PS00856">
    <property type="entry name" value="GUANYLATE_KINASE_1"/>
    <property type="match status" value="1"/>
</dbReference>
<dbReference type="PROSITE" id="PS50052">
    <property type="entry name" value="GUANYLATE_KINASE_2"/>
    <property type="match status" value="1"/>
</dbReference>
<keyword id="KW-0067">ATP-binding</keyword>
<keyword id="KW-0963">Cytoplasm</keyword>
<keyword id="KW-0418">Kinase</keyword>
<keyword id="KW-0547">Nucleotide-binding</keyword>
<keyword id="KW-1185">Reference proteome</keyword>
<keyword id="KW-0808">Transferase</keyword>
<organism>
    <name type="scientific">Mycoplasma genitalium (strain ATCC 33530 / DSM 19775 / NCTC 10195 / G37)</name>
    <name type="common">Mycoplasmoides genitalium</name>
    <dbReference type="NCBI Taxonomy" id="243273"/>
    <lineage>
        <taxon>Bacteria</taxon>
        <taxon>Bacillati</taxon>
        <taxon>Mycoplasmatota</taxon>
        <taxon>Mycoplasmoidales</taxon>
        <taxon>Mycoplasmoidaceae</taxon>
        <taxon>Mycoplasmoides</taxon>
    </lineage>
</organism>
<name>KGUA_MYCGE</name>